<organism>
    <name type="scientific">Acidovorax ebreus (strain TPSY)</name>
    <name type="common">Diaphorobacter sp. (strain TPSY)</name>
    <dbReference type="NCBI Taxonomy" id="535289"/>
    <lineage>
        <taxon>Bacteria</taxon>
        <taxon>Pseudomonadati</taxon>
        <taxon>Pseudomonadota</taxon>
        <taxon>Betaproteobacteria</taxon>
        <taxon>Burkholderiales</taxon>
        <taxon>Comamonadaceae</taxon>
        <taxon>Diaphorobacter</taxon>
    </lineage>
</organism>
<evidence type="ECO:0000255" key="1">
    <source>
        <dbReference type="HAMAP-Rule" id="MF_00094"/>
    </source>
</evidence>
<proteinExistence type="inferred from homology"/>
<keyword id="KW-0963">Cytoplasm</keyword>
<keyword id="KW-0488">Methylation</keyword>
<keyword id="KW-0648">Protein biosynthesis</keyword>
<keyword id="KW-1185">Reference proteome</keyword>
<protein>
    <recommendedName>
        <fullName evidence="1">Peptide chain release factor 2</fullName>
        <shortName evidence="1">RF-2</shortName>
    </recommendedName>
</protein>
<name>RF2_ACIET</name>
<comment type="function">
    <text evidence="1">Peptide chain release factor 2 directs the termination of translation in response to the peptide chain termination codons UGA and UAA.</text>
</comment>
<comment type="subcellular location">
    <subcellularLocation>
        <location evidence="1">Cytoplasm</location>
    </subcellularLocation>
</comment>
<comment type="PTM">
    <text evidence="1">Methylated by PrmC. Methylation increases the termination efficiency of RF2.</text>
</comment>
<comment type="similarity">
    <text evidence="1">Belongs to the prokaryotic/mitochondrial release factor family.</text>
</comment>
<dbReference type="EMBL" id="CP001392">
    <property type="protein sequence ID" value="ACM33686.1"/>
    <property type="molecule type" value="Genomic_DNA"/>
</dbReference>
<dbReference type="SMR" id="B9MBK7"/>
<dbReference type="KEGG" id="dia:Dtpsy_2248"/>
<dbReference type="eggNOG" id="COG1186">
    <property type="taxonomic scope" value="Bacteria"/>
</dbReference>
<dbReference type="HOGENOM" id="CLU_220733_0_1_4"/>
<dbReference type="Proteomes" id="UP000000450">
    <property type="component" value="Chromosome"/>
</dbReference>
<dbReference type="GO" id="GO:0005737">
    <property type="term" value="C:cytoplasm"/>
    <property type="evidence" value="ECO:0007669"/>
    <property type="project" value="UniProtKB-SubCell"/>
</dbReference>
<dbReference type="GO" id="GO:0016149">
    <property type="term" value="F:translation release factor activity, codon specific"/>
    <property type="evidence" value="ECO:0007669"/>
    <property type="project" value="UniProtKB-UniRule"/>
</dbReference>
<dbReference type="FunFam" id="3.30.160.20:FF:000010">
    <property type="entry name" value="Peptide chain release factor 2"/>
    <property type="match status" value="1"/>
</dbReference>
<dbReference type="Gene3D" id="3.30.160.20">
    <property type="match status" value="1"/>
</dbReference>
<dbReference type="Gene3D" id="3.30.70.1660">
    <property type="match status" value="1"/>
</dbReference>
<dbReference type="Gene3D" id="1.20.58.410">
    <property type="entry name" value="Release factor"/>
    <property type="match status" value="1"/>
</dbReference>
<dbReference type="HAMAP" id="MF_00094">
    <property type="entry name" value="Rel_fac_2"/>
    <property type="match status" value="1"/>
</dbReference>
<dbReference type="InterPro" id="IPR005139">
    <property type="entry name" value="PCRF"/>
</dbReference>
<dbReference type="InterPro" id="IPR000352">
    <property type="entry name" value="Pep_chain_release_fac_I"/>
</dbReference>
<dbReference type="InterPro" id="IPR045853">
    <property type="entry name" value="Pep_chain_release_fac_I_sf"/>
</dbReference>
<dbReference type="InterPro" id="IPR004374">
    <property type="entry name" value="PrfB"/>
</dbReference>
<dbReference type="NCBIfam" id="TIGR00020">
    <property type="entry name" value="prfB"/>
    <property type="match status" value="1"/>
</dbReference>
<dbReference type="PANTHER" id="PTHR43116:SF3">
    <property type="entry name" value="CLASS I PEPTIDE CHAIN RELEASE FACTOR"/>
    <property type="match status" value="1"/>
</dbReference>
<dbReference type="PANTHER" id="PTHR43116">
    <property type="entry name" value="PEPTIDE CHAIN RELEASE FACTOR 2"/>
    <property type="match status" value="1"/>
</dbReference>
<dbReference type="Pfam" id="PF03462">
    <property type="entry name" value="PCRF"/>
    <property type="match status" value="1"/>
</dbReference>
<dbReference type="Pfam" id="PF00472">
    <property type="entry name" value="RF-1"/>
    <property type="match status" value="1"/>
</dbReference>
<dbReference type="SMART" id="SM00937">
    <property type="entry name" value="PCRF"/>
    <property type="match status" value="1"/>
</dbReference>
<dbReference type="SUPFAM" id="SSF75620">
    <property type="entry name" value="Release factor"/>
    <property type="match status" value="1"/>
</dbReference>
<dbReference type="PROSITE" id="PS00745">
    <property type="entry name" value="RF_PROK_I"/>
    <property type="match status" value="1"/>
</dbReference>
<accession>B9MBK7</accession>
<gene>
    <name evidence="1" type="primary">prfB</name>
    <name type="ordered locus">Dtpsy_2248</name>
</gene>
<feature type="chain" id="PRO_1000193551" description="Peptide chain release factor 2">
    <location>
        <begin position="1"/>
        <end position="367"/>
    </location>
</feature>
<feature type="modified residue" description="N5-methylglutamine" evidence="1">
    <location>
        <position position="254"/>
    </location>
</feature>
<sequence>MEAERINLIGTTLEDLTERTQELRRYLDYDAKFERLRTVNASLEDPAVWNDPKKAQELGKEKKSLDAVVLTLQKLTTELADNAELYEMSKEEGDEAGLTTIEAEAEKLRPLIEELEFRRMFSNEADPLNCFVDIQAGAGGTEACDWASMLLRQYLKYAERKGFKATVEEETPGDVAGIKSATIKIEGEYAYGLLRTETGVHRLVRKSPFDSSGGRHTSFASLFVYPEIDDSIEININPSDVRTDTYRASGAGGQHINKTDSAVRLTHIPTGIVVQCQDGRSQHSNRDVAWQRLRSRLYDFEMRKRMEEQQKLEDTKTDVGWGHQIRSYVLDNSRIKDLRTNVEVSATQKVLDGDLDVFIEASLKQGV</sequence>
<reference key="1">
    <citation type="submission" date="2009-01" db="EMBL/GenBank/DDBJ databases">
        <title>Complete sequence of Diaphorobacter sp. TPSY.</title>
        <authorList>
            <consortium name="US DOE Joint Genome Institute"/>
            <person name="Lucas S."/>
            <person name="Copeland A."/>
            <person name="Lapidus A."/>
            <person name="Glavina del Rio T."/>
            <person name="Tice H."/>
            <person name="Bruce D."/>
            <person name="Goodwin L."/>
            <person name="Pitluck S."/>
            <person name="Chertkov O."/>
            <person name="Brettin T."/>
            <person name="Detter J.C."/>
            <person name="Han C."/>
            <person name="Larimer F."/>
            <person name="Land M."/>
            <person name="Hauser L."/>
            <person name="Kyrpides N."/>
            <person name="Mikhailova N."/>
            <person name="Coates J.D."/>
        </authorList>
    </citation>
    <scope>NUCLEOTIDE SEQUENCE [LARGE SCALE GENOMIC DNA]</scope>
    <source>
        <strain>TPSY</strain>
    </source>
</reference>